<feature type="chain" id="PRO_0000203005" description="Uncharacterized protein YIR016W">
    <location>
        <begin position="1"/>
        <end position="265"/>
    </location>
</feature>
<feature type="region of interest" description="Disordered" evidence="2">
    <location>
        <begin position="21"/>
        <end position="53"/>
    </location>
</feature>
<feature type="region of interest" description="Disordered" evidence="2">
    <location>
        <begin position="78"/>
        <end position="133"/>
    </location>
</feature>
<feature type="compositionally biased region" description="Acidic residues" evidence="2">
    <location>
        <begin position="90"/>
        <end position="101"/>
    </location>
</feature>
<feature type="compositionally biased region" description="Low complexity" evidence="2">
    <location>
        <begin position="114"/>
        <end position="123"/>
    </location>
</feature>
<feature type="binding site" evidence="1">
    <location>
        <begin position="137"/>
        <end position="144"/>
    </location>
    <ligand>
        <name>ATP</name>
        <dbReference type="ChEBI" id="CHEBI:30616"/>
    </ligand>
</feature>
<reference key="1">
    <citation type="journal article" date="1997" name="Nature">
        <title>The nucleotide sequence of Saccharomyces cerevisiae chromosome IX.</title>
        <authorList>
            <person name="Churcher C.M."/>
            <person name="Bowman S."/>
            <person name="Badcock K."/>
            <person name="Bankier A.T."/>
            <person name="Brown D."/>
            <person name="Chillingworth T."/>
            <person name="Connor R."/>
            <person name="Devlin K."/>
            <person name="Gentles S."/>
            <person name="Hamlin N."/>
            <person name="Harris D.E."/>
            <person name="Horsnell T."/>
            <person name="Hunt S."/>
            <person name="Jagels K."/>
            <person name="Jones M."/>
            <person name="Lye G."/>
            <person name="Moule S."/>
            <person name="Odell C."/>
            <person name="Pearson D."/>
            <person name="Rajandream M.A."/>
            <person name="Rice P."/>
            <person name="Rowley N."/>
            <person name="Skelton J."/>
            <person name="Smith V."/>
            <person name="Walsh S.V."/>
            <person name="Whitehead S."/>
            <person name="Barrell B.G."/>
        </authorList>
    </citation>
    <scope>NUCLEOTIDE SEQUENCE [LARGE SCALE GENOMIC DNA]</scope>
    <source>
        <strain>ATCC 204508 / S288c</strain>
    </source>
</reference>
<reference key="2">
    <citation type="journal article" date="2014" name="G3 (Bethesda)">
        <title>The reference genome sequence of Saccharomyces cerevisiae: Then and now.</title>
        <authorList>
            <person name="Engel S.R."/>
            <person name="Dietrich F.S."/>
            <person name="Fisk D.G."/>
            <person name="Binkley G."/>
            <person name="Balakrishnan R."/>
            <person name="Costanzo M.C."/>
            <person name="Dwight S.S."/>
            <person name="Hitz B.C."/>
            <person name="Karra K."/>
            <person name="Nash R.S."/>
            <person name="Weng S."/>
            <person name="Wong E.D."/>
            <person name="Lloyd P."/>
            <person name="Skrzypek M.S."/>
            <person name="Miyasato S.R."/>
            <person name="Simison M."/>
            <person name="Cherry J.M."/>
        </authorList>
    </citation>
    <scope>GENOME REANNOTATION</scope>
    <source>
        <strain>ATCC 204508 / S288c</strain>
    </source>
</reference>
<name>YIT6_YEAST</name>
<keyword id="KW-0067">ATP-binding</keyword>
<keyword id="KW-0547">Nucleotide-binding</keyword>
<keyword id="KW-1185">Reference proteome</keyword>
<organism>
    <name type="scientific">Saccharomyces cerevisiae (strain ATCC 204508 / S288c)</name>
    <name type="common">Baker's yeast</name>
    <dbReference type="NCBI Taxonomy" id="559292"/>
    <lineage>
        <taxon>Eukaryota</taxon>
        <taxon>Fungi</taxon>
        <taxon>Dikarya</taxon>
        <taxon>Ascomycota</taxon>
        <taxon>Saccharomycotina</taxon>
        <taxon>Saccharomycetes</taxon>
        <taxon>Saccharomycetales</taxon>
        <taxon>Saccharomycetaceae</taxon>
        <taxon>Saccharomyces</taxon>
    </lineage>
</organism>
<evidence type="ECO:0000255" key="1"/>
<evidence type="ECO:0000256" key="2">
    <source>
        <dbReference type="SAM" id="MobiDB-lite"/>
    </source>
</evidence>
<proteinExistence type="predicted"/>
<protein>
    <recommendedName>
        <fullName>Uncharacterized protein YIR016W</fullName>
    </recommendedName>
</protein>
<accession>P40572</accession>
<accession>D6VVU6</accession>
<gene>
    <name type="ordered locus">YIR016W</name>
</gene>
<sequence>MSGTRCLLGVGLPVDVTATETLTHDEQGPGVEPGPCSRGSSIDGLLPSLLGPHDDVDDDSAAFHKYMTLSRDGAGAIHAPSLVEDASRNDDDDDDEDDDDSSMSRDLSKALDMSSSSSSSPRVQSRRHRSSVSAISAILHQGKSGREDITGSLSVPAEQEKLSFLAKASSIFFRRNSMPRDKHTHSVCPASRPDSERFIVTSAAAQSLRRQQQLEDAQYARVITNFRTIGWCSPSEIESVEYKRSLINAEWDEKISLLSHAQCYK</sequence>
<dbReference type="EMBL" id="Z37996">
    <property type="protein sequence ID" value="CAA86086.1"/>
    <property type="molecule type" value="Genomic_DNA"/>
</dbReference>
<dbReference type="EMBL" id="BK006942">
    <property type="protein sequence ID" value="DAA08562.1"/>
    <property type="molecule type" value="Genomic_DNA"/>
</dbReference>
<dbReference type="PIR" id="S48360">
    <property type="entry name" value="S48360"/>
</dbReference>
<dbReference type="RefSeq" id="NP_012281.1">
    <property type="nucleotide sequence ID" value="NM_001179538.1"/>
</dbReference>
<dbReference type="BioGRID" id="35008">
    <property type="interactions" value="197"/>
</dbReference>
<dbReference type="DIP" id="DIP-5666N"/>
<dbReference type="FunCoup" id="P40572">
    <property type="interactions" value="58"/>
</dbReference>
<dbReference type="IntAct" id="P40572">
    <property type="interactions" value="1"/>
</dbReference>
<dbReference type="STRING" id="4932.YIR016W"/>
<dbReference type="iPTMnet" id="P40572"/>
<dbReference type="PaxDb" id="4932-YIR016W"/>
<dbReference type="PeptideAtlas" id="P40572"/>
<dbReference type="EnsemblFungi" id="YIR016W_mRNA">
    <property type="protein sequence ID" value="YIR016W"/>
    <property type="gene ID" value="YIR016W"/>
</dbReference>
<dbReference type="GeneID" id="854833"/>
<dbReference type="KEGG" id="sce:YIR016W"/>
<dbReference type="AGR" id="SGD:S000001455"/>
<dbReference type="SGD" id="S000001455">
    <property type="gene designation" value="YIR016W"/>
</dbReference>
<dbReference type="VEuPathDB" id="FungiDB:YIR016W"/>
<dbReference type="HOGENOM" id="CLU_1200636_0_0_1"/>
<dbReference type="InParanoid" id="P40572"/>
<dbReference type="OMA" id="FRTIGWC"/>
<dbReference type="OrthoDB" id="4055741at2759"/>
<dbReference type="BioCyc" id="YEAST:G3O-31436-MONOMER"/>
<dbReference type="BioGRID-ORCS" id="854833">
    <property type="hits" value="3 hits in 10 CRISPR screens"/>
</dbReference>
<dbReference type="PRO" id="PR:P40572"/>
<dbReference type="Proteomes" id="UP000002311">
    <property type="component" value="Chromosome IX"/>
</dbReference>
<dbReference type="RNAct" id="P40572">
    <property type="molecule type" value="protein"/>
</dbReference>
<dbReference type="GO" id="GO:0005524">
    <property type="term" value="F:ATP binding"/>
    <property type="evidence" value="ECO:0007669"/>
    <property type="project" value="UniProtKB-KW"/>
</dbReference>